<evidence type="ECO:0000255" key="1">
    <source>
        <dbReference type="HAMAP-Rule" id="MF_01263"/>
    </source>
</evidence>
<keyword id="KW-0067">ATP-binding</keyword>
<keyword id="KW-0460">Magnesium</keyword>
<keyword id="KW-0479">Metal-binding</keyword>
<keyword id="KW-0547">Nucleotide-binding</keyword>
<keyword id="KW-0548">Nucleotidyltransferase</keyword>
<keyword id="KW-0692">RNA repair</keyword>
<keyword id="KW-0694">RNA-binding</keyword>
<keyword id="KW-0808">Transferase</keyword>
<keyword id="KW-0819">tRNA processing</keyword>
<dbReference type="EC" id="2.7.7.72" evidence="1"/>
<dbReference type="EMBL" id="CP000407">
    <property type="protein sequence ID" value="ABP89795.1"/>
    <property type="molecule type" value="Genomic_DNA"/>
</dbReference>
<dbReference type="SMR" id="A4VUK6"/>
<dbReference type="STRING" id="391295.SSU05_0829"/>
<dbReference type="KEGG" id="ssu:SSU05_0829"/>
<dbReference type="eggNOG" id="COG0617">
    <property type="taxonomic scope" value="Bacteria"/>
</dbReference>
<dbReference type="HOGENOM" id="CLU_015961_3_1_9"/>
<dbReference type="GO" id="GO:0005524">
    <property type="term" value="F:ATP binding"/>
    <property type="evidence" value="ECO:0007669"/>
    <property type="project" value="UniProtKB-UniRule"/>
</dbReference>
<dbReference type="GO" id="GO:0004810">
    <property type="term" value="F:CCA tRNA nucleotidyltransferase activity"/>
    <property type="evidence" value="ECO:0007669"/>
    <property type="project" value="UniProtKB-UniRule"/>
</dbReference>
<dbReference type="GO" id="GO:0000287">
    <property type="term" value="F:magnesium ion binding"/>
    <property type="evidence" value="ECO:0007669"/>
    <property type="project" value="UniProtKB-UniRule"/>
</dbReference>
<dbReference type="GO" id="GO:0000049">
    <property type="term" value="F:tRNA binding"/>
    <property type="evidence" value="ECO:0007669"/>
    <property type="project" value="UniProtKB-UniRule"/>
</dbReference>
<dbReference type="GO" id="GO:0042245">
    <property type="term" value="P:RNA repair"/>
    <property type="evidence" value="ECO:0007669"/>
    <property type="project" value="UniProtKB-KW"/>
</dbReference>
<dbReference type="GO" id="GO:0001680">
    <property type="term" value="P:tRNA 3'-terminal CCA addition"/>
    <property type="evidence" value="ECO:0007669"/>
    <property type="project" value="UniProtKB-UniRule"/>
</dbReference>
<dbReference type="CDD" id="cd05398">
    <property type="entry name" value="NT_ClassII-CCAase"/>
    <property type="match status" value="1"/>
</dbReference>
<dbReference type="Gene3D" id="1.10.110.30">
    <property type="match status" value="1"/>
</dbReference>
<dbReference type="Gene3D" id="1.10.246.80">
    <property type="match status" value="1"/>
</dbReference>
<dbReference type="Gene3D" id="1.20.58.560">
    <property type="match status" value="1"/>
</dbReference>
<dbReference type="Gene3D" id="3.30.460.10">
    <property type="entry name" value="Beta Polymerase, domain 2"/>
    <property type="match status" value="1"/>
</dbReference>
<dbReference type="HAMAP" id="MF_01263">
    <property type="entry name" value="CCA_bact_type3"/>
    <property type="match status" value="1"/>
</dbReference>
<dbReference type="InterPro" id="IPR050264">
    <property type="entry name" value="Bact_CCA-adding_enz_type3_sf"/>
</dbReference>
<dbReference type="InterPro" id="IPR032810">
    <property type="entry name" value="CCA-adding_enz_C"/>
</dbReference>
<dbReference type="InterPro" id="IPR023068">
    <property type="entry name" value="CCA-adding_enz_firmicutes"/>
</dbReference>
<dbReference type="InterPro" id="IPR043519">
    <property type="entry name" value="NT_sf"/>
</dbReference>
<dbReference type="InterPro" id="IPR002646">
    <property type="entry name" value="PolA_pol_head_dom"/>
</dbReference>
<dbReference type="InterPro" id="IPR032828">
    <property type="entry name" value="PolyA_RNA-bd"/>
</dbReference>
<dbReference type="NCBIfam" id="NF009814">
    <property type="entry name" value="PRK13299.1"/>
    <property type="match status" value="1"/>
</dbReference>
<dbReference type="PANTHER" id="PTHR46173">
    <property type="entry name" value="CCA TRNA NUCLEOTIDYLTRANSFERASE 1, MITOCHONDRIAL"/>
    <property type="match status" value="1"/>
</dbReference>
<dbReference type="PANTHER" id="PTHR46173:SF1">
    <property type="entry name" value="CCA TRNA NUCLEOTIDYLTRANSFERASE 1, MITOCHONDRIAL"/>
    <property type="match status" value="1"/>
</dbReference>
<dbReference type="Pfam" id="PF01743">
    <property type="entry name" value="PolyA_pol"/>
    <property type="match status" value="1"/>
</dbReference>
<dbReference type="Pfam" id="PF12627">
    <property type="entry name" value="PolyA_pol_RNAbd"/>
    <property type="match status" value="1"/>
</dbReference>
<dbReference type="Pfam" id="PF13735">
    <property type="entry name" value="tRNA_NucTran2_2"/>
    <property type="match status" value="1"/>
</dbReference>
<dbReference type="SUPFAM" id="SSF81301">
    <property type="entry name" value="Nucleotidyltransferase"/>
    <property type="match status" value="1"/>
</dbReference>
<dbReference type="SUPFAM" id="SSF81891">
    <property type="entry name" value="Poly A polymerase C-terminal region-like"/>
    <property type="match status" value="1"/>
</dbReference>
<name>CCA_STRSY</name>
<comment type="function">
    <text evidence="1">Catalyzes the addition and repair of the essential 3'-terminal CCA sequence in tRNAs without using a nucleic acid template. Adds these three nucleotides in the order of C, C, and A to the tRNA nucleotide-73, using CTP and ATP as substrates and producing inorganic pyrophosphate. tRNA 3'-terminal CCA addition is required both for tRNA processing and repair. Also involved in tRNA surveillance by mediating tandem CCA addition to generate a CCACCA at the 3' terminus of unstable tRNAs. While stable tRNAs receive only 3'-terminal CCA, unstable tRNAs are marked with CCACCA and rapidly degraded.</text>
</comment>
<comment type="catalytic activity">
    <reaction evidence="1">
        <text>a tRNA precursor + 2 CTP + ATP = a tRNA with a 3' CCA end + 3 diphosphate</text>
        <dbReference type="Rhea" id="RHEA:14433"/>
        <dbReference type="Rhea" id="RHEA-COMP:10465"/>
        <dbReference type="Rhea" id="RHEA-COMP:10468"/>
        <dbReference type="ChEBI" id="CHEBI:30616"/>
        <dbReference type="ChEBI" id="CHEBI:33019"/>
        <dbReference type="ChEBI" id="CHEBI:37563"/>
        <dbReference type="ChEBI" id="CHEBI:74896"/>
        <dbReference type="ChEBI" id="CHEBI:83071"/>
        <dbReference type="EC" id="2.7.7.72"/>
    </reaction>
</comment>
<comment type="catalytic activity">
    <reaction evidence="1">
        <text>a tRNA with a 3' CCA end + 2 CTP + ATP = a tRNA with a 3' CCACCA end + 3 diphosphate</text>
        <dbReference type="Rhea" id="RHEA:76235"/>
        <dbReference type="Rhea" id="RHEA-COMP:10468"/>
        <dbReference type="Rhea" id="RHEA-COMP:18655"/>
        <dbReference type="ChEBI" id="CHEBI:30616"/>
        <dbReference type="ChEBI" id="CHEBI:33019"/>
        <dbReference type="ChEBI" id="CHEBI:37563"/>
        <dbReference type="ChEBI" id="CHEBI:83071"/>
        <dbReference type="ChEBI" id="CHEBI:195187"/>
    </reaction>
    <physiologicalReaction direction="left-to-right" evidence="1">
        <dbReference type="Rhea" id="RHEA:76236"/>
    </physiologicalReaction>
</comment>
<comment type="cofactor">
    <cofactor evidence="1">
        <name>Mg(2+)</name>
        <dbReference type="ChEBI" id="CHEBI:18420"/>
    </cofactor>
</comment>
<comment type="subunit">
    <text evidence="1">Homodimer.</text>
</comment>
<comment type="miscellaneous">
    <text evidence="1">A single active site specifically recognizes both ATP and CTP and is responsible for their addition.</text>
</comment>
<comment type="similarity">
    <text evidence="1">Belongs to the tRNA nucleotidyltransferase/poly(A) polymerase family. Bacterial CCA-adding enzyme type 3 subfamily.</text>
</comment>
<feature type="chain" id="PRO_1000054345" description="CCA-adding enzyme">
    <location>
        <begin position="1"/>
        <end position="403"/>
    </location>
</feature>
<feature type="binding site" evidence="1">
    <location>
        <position position="32"/>
    </location>
    <ligand>
        <name>ATP</name>
        <dbReference type="ChEBI" id="CHEBI:30616"/>
    </ligand>
</feature>
<feature type="binding site" evidence="1">
    <location>
        <position position="32"/>
    </location>
    <ligand>
        <name>CTP</name>
        <dbReference type="ChEBI" id="CHEBI:37563"/>
    </ligand>
</feature>
<feature type="binding site" evidence="1">
    <location>
        <position position="35"/>
    </location>
    <ligand>
        <name>ATP</name>
        <dbReference type="ChEBI" id="CHEBI:30616"/>
    </ligand>
</feature>
<feature type="binding site" evidence="1">
    <location>
        <position position="35"/>
    </location>
    <ligand>
        <name>CTP</name>
        <dbReference type="ChEBI" id="CHEBI:37563"/>
    </ligand>
</feature>
<feature type="binding site" evidence="1">
    <location>
        <position position="45"/>
    </location>
    <ligand>
        <name>Mg(2+)</name>
        <dbReference type="ChEBI" id="CHEBI:18420"/>
    </ligand>
</feature>
<feature type="binding site" evidence="1">
    <location>
        <position position="47"/>
    </location>
    <ligand>
        <name>Mg(2+)</name>
        <dbReference type="ChEBI" id="CHEBI:18420"/>
    </ligand>
</feature>
<feature type="binding site" evidence="1">
    <location>
        <position position="116"/>
    </location>
    <ligand>
        <name>ATP</name>
        <dbReference type="ChEBI" id="CHEBI:30616"/>
    </ligand>
</feature>
<feature type="binding site" evidence="1">
    <location>
        <position position="116"/>
    </location>
    <ligand>
        <name>CTP</name>
        <dbReference type="ChEBI" id="CHEBI:37563"/>
    </ligand>
</feature>
<feature type="binding site" evidence="1">
    <location>
        <position position="159"/>
    </location>
    <ligand>
        <name>ATP</name>
        <dbReference type="ChEBI" id="CHEBI:30616"/>
    </ligand>
</feature>
<feature type="binding site" evidence="1">
    <location>
        <position position="159"/>
    </location>
    <ligand>
        <name>CTP</name>
        <dbReference type="ChEBI" id="CHEBI:37563"/>
    </ligand>
</feature>
<feature type="binding site" evidence="1">
    <location>
        <position position="162"/>
    </location>
    <ligand>
        <name>ATP</name>
        <dbReference type="ChEBI" id="CHEBI:30616"/>
    </ligand>
</feature>
<feature type="binding site" evidence="1">
    <location>
        <position position="162"/>
    </location>
    <ligand>
        <name>CTP</name>
        <dbReference type="ChEBI" id="CHEBI:37563"/>
    </ligand>
</feature>
<feature type="binding site" evidence="1">
    <location>
        <position position="165"/>
    </location>
    <ligand>
        <name>ATP</name>
        <dbReference type="ChEBI" id="CHEBI:30616"/>
    </ligand>
</feature>
<feature type="binding site" evidence="1">
    <location>
        <position position="165"/>
    </location>
    <ligand>
        <name>CTP</name>
        <dbReference type="ChEBI" id="CHEBI:37563"/>
    </ligand>
</feature>
<feature type="binding site" evidence="1">
    <location>
        <position position="168"/>
    </location>
    <ligand>
        <name>ATP</name>
        <dbReference type="ChEBI" id="CHEBI:30616"/>
    </ligand>
</feature>
<feature type="binding site" evidence="1">
    <location>
        <position position="168"/>
    </location>
    <ligand>
        <name>CTP</name>
        <dbReference type="ChEBI" id="CHEBI:37563"/>
    </ligand>
</feature>
<protein>
    <recommendedName>
        <fullName evidence="1">CCA-adding enzyme</fullName>
        <ecNumber evidence="1">2.7.7.72</ecNumber>
    </recommendedName>
    <alternativeName>
        <fullName evidence="1">CCA tRNA nucleotidyltransferase</fullName>
    </alternativeName>
    <alternativeName>
        <fullName evidence="1">tRNA CCA-pyrophosphorylase</fullName>
    </alternativeName>
    <alternativeName>
        <fullName evidence="1">tRNA adenylyl-/cytidylyl- transferase</fullName>
    </alternativeName>
    <alternativeName>
        <fullName evidence="1">tRNA nucleotidyltransferase</fullName>
    </alternativeName>
    <alternativeName>
        <fullName evidence="1">tRNA-NT</fullName>
    </alternativeName>
</protein>
<accession>A4VUK6</accession>
<reference key="1">
    <citation type="journal article" date="2007" name="PLoS ONE">
        <title>A glimpse of streptococcal toxic shock syndrome from comparative genomics of S. suis 2 Chinese isolates.</title>
        <authorList>
            <person name="Chen C."/>
            <person name="Tang J."/>
            <person name="Dong W."/>
            <person name="Wang C."/>
            <person name="Feng Y."/>
            <person name="Wang J."/>
            <person name="Zheng F."/>
            <person name="Pan X."/>
            <person name="Liu D."/>
            <person name="Li M."/>
            <person name="Song Y."/>
            <person name="Zhu X."/>
            <person name="Sun H."/>
            <person name="Feng T."/>
            <person name="Guo Z."/>
            <person name="Ju A."/>
            <person name="Ge J."/>
            <person name="Dong Y."/>
            <person name="Sun W."/>
            <person name="Jiang Y."/>
            <person name="Wang J."/>
            <person name="Yan J."/>
            <person name="Yang H."/>
            <person name="Wang X."/>
            <person name="Gao G.F."/>
            <person name="Yang R."/>
            <person name="Wang J."/>
            <person name="Yu J."/>
        </authorList>
    </citation>
    <scope>NUCLEOTIDE SEQUENCE [LARGE SCALE GENOMIC DNA]</scope>
    <source>
        <strain>05ZYH33</strain>
    </source>
</reference>
<sequence>MKLNNLPSEFQEALPILEKIKAAGFEAYFVGGSVRDAILGRPIHDVDIATSSYPQETKQIFSRTIDVGIEHGTVLVLEGKKEYEITTFRTEEEYVDFRRPSQVSFVRSLEEDLKRRDFTVNAFALDEEAQIVDLFDGMTDLENRTLRAVGIPAERFNEDALRIMRGFRFAATLDFEIEPTTFEAMVQTAPLLEKISVERSFIEFDKLLMADFWRKGLRAMIDSKAYNFLPDLAGKSDELEAMLTSLTEEFRFSTSEQAWALLFVCLGIDNIKSFLKKWKTSNDFQRSVVKLVEIYQLRQAGPVTKQICFKYGKEFLYLVEELHQAQGFVTDFAAIDKIDQALTIHDKHEIVVNGGHLMKAFDLKPGPVLGELLKEVEFQIVEGQLENEEQAIMTFVKGILENE</sequence>
<gene>
    <name evidence="1" type="primary">cca</name>
    <name type="ordered locus">SSU05_0829</name>
</gene>
<organism>
    <name type="scientific">Streptococcus suis (strain 05ZYH33)</name>
    <dbReference type="NCBI Taxonomy" id="391295"/>
    <lineage>
        <taxon>Bacteria</taxon>
        <taxon>Bacillati</taxon>
        <taxon>Bacillota</taxon>
        <taxon>Bacilli</taxon>
        <taxon>Lactobacillales</taxon>
        <taxon>Streptococcaceae</taxon>
        <taxon>Streptococcus</taxon>
    </lineage>
</organism>
<proteinExistence type="inferred from homology"/>